<gene>
    <name evidence="1" type="primary">nuoN</name>
    <name type="ordered locus">SG1589</name>
</gene>
<dbReference type="EC" id="7.1.1.-" evidence="1"/>
<dbReference type="EMBL" id="AP008232">
    <property type="protein sequence ID" value="BAE74864.1"/>
    <property type="molecule type" value="Genomic_DNA"/>
</dbReference>
<dbReference type="RefSeq" id="WP_011411409.1">
    <property type="nucleotide sequence ID" value="NC_007712.1"/>
</dbReference>
<dbReference type="SMR" id="Q2NSL1"/>
<dbReference type="STRING" id="343509.SG1589"/>
<dbReference type="KEGG" id="sgl:SG1589"/>
<dbReference type="eggNOG" id="COG1007">
    <property type="taxonomic scope" value="Bacteria"/>
</dbReference>
<dbReference type="HOGENOM" id="CLU_007100_1_5_6"/>
<dbReference type="OrthoDB" id="9768329at2"/>
<dbReference type="BioCyc" id="SGLO343509:SGP1_RS14485-MONOMER"/>
<dbReference type="Proteomes" id="UP000001932">
    <property type="component" value="Chromosome"/>
</dbReference>
<dbReference type="GO" id="GO:0005886">
    <property type="term" value="C:plasma membrane"/>
    <property type="evidence" value="ECO:0007669"/>
    <property type="project" value="UniProtKB-SubCell"/>
</dbReference>
<dbReference type="GO" id="GO:0008137">
    <property type="term" value="F:NADH dehydrogenase (ubiquinone) activity"/>
    <property type="evidence" value="ECO:0007669"/>
    <property type="project" value="InterPro"/>
</dbReference>
<dbReference type="GO" id="GO:0050136">
    <property type="term" value="F:NADH:ubiquinone reductase (non-electrogenic) activity"/>
    <property type="evidence" value="ECO:0007669"/>
    <property type="project" value="UniProtKB-UniRule"/>
</dbReference>
<dbReference type="GO" id="GO:0048038">
    <property type="term" value="F:quinone binding"/>
    <property type="evidence" value="ECO:0007669"/>
    <property type="project" value="UniProtKB-KW"/>
</dbReference>
<dbReference type="GO" id="GO:0042773">
    <property type="term" value="P:ATP synthesis coupled electron transport"/>
    <property type="evidence" value="ECO:0007669"/>
    <property type="project" value="InterPro"/>
</dbReference>
<dbReference type="HAMAP" id="MF_00445">
    <property type="entry name" value="NDH1_NuoN_1"/>
    <property type="match status" value="1"/>
</dbReference>
<dbReference type="InterPro" id="IPR010096">
    <property type="entry name" value="NADH-Q_OxRdtase_suN/2"/>
</dbReference>
<dbReference type="InterPro" id="IPR001750">
    <property type="entry name" value="ND/Mrp_TM"/>
</dbReference>
<dbReference type="NCBIfam" id="TIGR01770">
    <property type="entry name" value="NDH_I_N"/>
    <property type="match status" value="1"/>
</dbReference>
<dbReference type="NCBIfam" id="NF004439">
    <property type="entry name" value="PRK05777.1-1"/>
    <property type="match status" value="1"/>
</dbReference>
<dbReference type="PANTHER" id="PTHR22773">
    <property type="entry name" value="NADH DEHYDROGENASE"/>
    <property type="match status" value="1"/>
</dbReference>
<dbReference type="Pfam" id="PF00361">
    <property type="entry name" value="Proton_antipo_M"/>
    <property type="match status" value="1"/>
</dbReference>
<reference key="1">
    <citation type="journal article" date="2006" name="Genome Res.">
        <title>Massive genome erosion and functional adaptations provide insights into the symbiotic lifestyle of Sodalis glossinidius in the tsetse host.</title>
        <authorList>
            <person name="Toh H."/>
            <person name="Weiss B.L."/>
            <person name="Perkin S.A.H."/>
            <person name="Yamashita A."/>
            <person name="Oshima K."/>
            <person name="Hattori M."/>
            <person name="Aksoy S."/>
        </authorList>
    </citation>
    <scope>NUCLEOTIDE SEQUENCE [LARGE SCALE GENOMIC DNA]</scope>
    <source>
        <strain>morsitans</strain>
    </source>
</reference>
<name>NUON_SODGM</name>
<keyword id="KW-0997">Cell inner membrane</keyword>
<keyword id="KW-1003">Cell membrane</keyword>
<keyword id="KW-0472">Membrane</keyword>
<keyword id="KW-0520">NAD</keyword>
<keyword id="KW-0874">Quinone</keyword>
<keyword id="KW-1278">Translocase</keyword>
<keyword id="KW-0812">Transmembrane</keyword>
<keyword id="KW-1133">Transmembrane helix</keyword>
<keyword id="KW-0813">Transport</keyword>
<keyword id="KW-0830">Ubiquinone</keyword>
<accession>Q2NSL1</accession>
<feature type="chain" id="PRO_0000249453" description="NADH-quinone oxidoreductase subunit N">
    <location>
        <begin position="1"/>
        <end position="485"/>
    </location>
</feature>
<feature type="transmembrane region" description="Helical" evidence="1">
    <location>
        <begin position="8"/>
        <end position="28"/>
    </location>
</feature>
<feature type="transmembrane region" description="Helical" evidence="1">
    <location>
        <begin position="35"/>
        <end position="55"/>
    </location>
</feature>
<feature type="transmembrane region" description="Helical" evidence="1">
    <location>
        <begin position="75"/>
        <end position="95"/>
    </location>
</feature>
<feature type="transmembrane region" description="Helical" evidence="1">
    <location>
        <begin position="105"/>
        <end position="125"/>
    </location>
</feature>
<feature type="transmembrane region" description="Helical" evidence="1">
    <location>
        <begin position="127"/>
        <end position="147"/>
    </location>
</feature>
<feature type="transmembrane region" description="Helical" evidence="1">
    <location>
        <begin position="159"/>
        <end position="179"/>
    </location>
</feature>
<feature type="transmembrane region" description="Helical" evidence="1">
    <location>
        <begin position="203"/>
        <end position="223"/>
    </location>
</feature>
<feature type="transmembrane region" description="Helical" evidence="1">
    <location>
        <begin position="235"/>
        <end position="255"/>
    </location>
</feature>
<feature type="transmembrane region" description="Helical" evidence="1">
    <location>
        <begin position="271"/>
        <end position="291"/>
    </location>
</feature>
<feature type="transmembrane region" description="Helical" evidence="1">
    <location>
        <begin position="303"/>
        <end position="323"/>
    </location>
</feature>
<feature type="transmembrane region" description="Helical" evidence="1">
    <location>
        <begin position="326"/>
        <end position="346"/>
    </location>
</feature>
<feature type="transmembrane region" description="Helical" evidence="1">
    <location>
        <begin position="371"/>
        <end position="393"/>
    </location>
</feature>
<feature type="transmembrane region" description="Helical" evidence="1">
    <location>
        <begin position="406"/>
        <end position="426"/>
    </location>
</feature>
<feature type="transmembrane region" description="Helical" evidence="1">
    <location>
        <begin position="449"/>
        <end position="469"/>
    </location>
</feature>
<evidence type="ECO:0000255" key="1">
    <source>
        <dbReference type="HAMAP-Rule" id="MF_00445"/>
    </source>
</evidence>
<organism>
    <name type="scientific">Sodalis glossinidius (strain morsitans)</name>
    <dbReference type="NCBI Taxonomy" id="343509"/>
    <lineage>
        <taxon>Bacteria</taxon>
        <taxon>Pseudomonadati</taxon>
        <taxon>Pseudomonadota</taxon>
        <taxon>Gammaproteobacteria</taxon>
        <taxon>Enterobacterales</taxon>
        <taxon>Bruguierivoracaceae</taxon>
        <taxon>Sodalis</taxon>
    </lineage>
</organism>
<proteinExistence type="inferred from homology"/>
<protein>
    <recommendedName>
        <fullName evidence="1">NADH-quinone oxidoreductase subunit N</fullName>
        <ecNumber evidence="1">7.1.1.-</ecNumber>
    </recommendedName>
    <alternativeName>
        <fullName evidence="1">NADH dehydrogenase I subunit N</fullName>
    </alternativeName>
    <alternativeName>
        <fullName evidence="1">NDH-1 subunit N</fullName>
    </alternativeName>
</protein>
<comment type="function">
    <text evidence="1">NDH-1 shuttles electrons from NADH, via FMN and iron-sulfur (Fe-S) centers, to quinones in the respiratory chain. The immediate electron acceptor for the enzyme in this species is believed to be ubiquinone. Couples the redox reaction to proton translocation (for every two electrons transferred, four hydrogen ions are translocated across the cytoplasmic membrane), and thus conserves the redox energy in a proton gradient.</text>
</comment>
<comment type="catalytic activity">
    <reaction evidence="1">
        <text>a quinone + NADH + 5 H(+)(in) = a quinol + NAD(+) + 4 H(+)(out)</text>
        <dbReference type="Rhea" id="RHEA:57888"/>
        <dbReference type="ChEBI" id="CHEBI:15378"/>
        <dbReference type="ChEBI" id="CHEBI:24646"/>
        <dbReference type="ChEBI" id="CHEBI:57540"/>
        <dbReference type="ChEBI" id="CHEBI:57945"/>
        <dbReference type="ChEBI" id="CHEBI:132124"/>
    </reaction>
</comment>
<comment type="subunit">
    <text evidence="1">NDH-1 is composed of 13 different subunits. Subunits NuoA, H, J, K, L, M, N constitute the membrane sector of the complex.</text>
</comment>
<comment type="subcellular location">
    <subcellularLocation>
        <location evidence="1">Cell inner membrane</location>
        <topology evidence="1">Multi-pass membrane protein</topology>
    </subcellularLocation>
</comment>
<comment type="similarity">
    <text evidence="1">Belongs to the complex I subunit 2 family.</text>
</comment>
<sequence length="485" mass="52229">MTITPQQLIALLPLLIVGLTVVVVMLCIAWRRNHFINSTLTVIGINLALLSLWFVTQNGPMDVTPLMRVDGFSMFYTGLVLVASLATSTLAYAWLAGYPGNRDEFYLLVLIATMGGILLASANHLAALFLGIELISLPLFGMVGYAFRQKRSLEASIKYTLLSAAAASFLLFGMALVYAQTGQLSFTALGQTLNDTMLTQPVLLAGLGMMVVGLGFKLSLVPFHLWTPDVYQGAPVPVSTFLATASKIAIFAVVMRLFLYAPVTHSDTVRLVLAIIAFASMLFGNLMALSQSNIKRVLGYSSIAHLGYLLVGLIVVQAHTLALETVGVYLAGYLFASLGAFGVVSLMSSTYTGEDADSLYSYRGLFWHKPLLSSVLTVMMLSLAGIPMTLGFIGKFYVIALGVNSHLGWLTGAVVAGSAIGLFYYLRIMVSLYLSPPENLRRDMPSNWALTAGGVVVLISSLLVLLLGLYPQPLITLVQLAYPIL</sequence>